<dbReference type="EC" id="4.-.-.-" evidence="6"/>
<dbReference type="EC" id="3.4.-.-" evidence="1"/>
<dbReference type="EMBL" id="L13279">
    <property type="status" value="NOT_ANNOTATED_CDS"/>
    <property type="molecule type" value="Genomic_DNA"/>
</dbReference>
<dbReference type="EMBL" id="U00096">
    <property type="protein sequence ID" value="AAT48139.1"/>
    <property type="molecule type" value="Genomic_DNA"/>
</dbReference>
<dbReference type="EMBL" id="AP009048">
    <property type="protein sequence ID" value="BAE76551.1"/>
    <property type="molecule type" value="Genomic_DNA"/>
</dbReference>
<dbReference type="PIR" id="H64956">
    <property type="entry name" value="H64956"/>
</dbReference>
<dbReference type="RefSeq" id="WP_000334583.1">
    <property type="nucleotide sequence ID" value="NZ_LN832404.1"/>
</dbReference>
<dbReference type="RefSeq" id="YP_025310.1">
    <property type="nucleotide sequence ID" value="NC_000913.3"/>
</dbReference>
<dbReference type="PDB" id="2ICU">
    <property type="method" value="X-ray"/>
    <property type="resolution" value="1.60 A"/>
    <property type="chains" value="A/B=1-222"/>
</dbReference>
<dbReference type="PDB" id="6KBS">
    <property type="method" value="X-ray"/>
    <property type="resolution" value="1.60 A"/>
    <property type="chains" value="B=2-222"/>
</dbReference>
<dbReference type="PDB" id="6KBU">
    <property type="method" value="X-ray"/>
    <property type="resolution" value="2.10 A"/>
    <property type="chains" value="A/B=2-222"/>
</dbReference>
<dbReference type="PDB" id="6KBX">
    <property type="method" value="X-ray"/>
    <property type="resolution" value="1.22 A"/>
    <property type="chains" value="B=2-222"/>
</dbReference>
<dbReference type="PDB" id="6KBZ">
    <property type="method" value="X-ray"/>
    <property type="resolution" value="1.65 A"/>
    <property type="chains" value="B/D/F/H=2-222"/>
</dbReference>
<dbReference type="PDB" id="6KCQ">
    <property type="method" value="X-ray"/>
    <property type="resolution" value="1.70 A"/>
    <property type="chains" value="B=1-222"/>
</dbReference>
<dbReference type="PDB" id="6KIJ">
    <property type="method" value="X-ray"/>
    <property type="resolution" value="1.58 A"/>
    <property type="chains" value="B=2-222"/>
</dbReference>
<dbReference type="PDB" id="6NUA">
    <property type="method" value="X-ray"/>
    <property type="resolution" value="1.64 A"/>
    <property type="chains" value="A/B=2-222"/>
</dbReference>
<dbReference type="PDB" id="6NUH">
    <property type="method" value="X-ray"/>
    <property type="resolution" value="1.59 A"/>
    <property type="chains" value="A=2-222"/>
</dbReference>
<dbReference type="PDB" id="8D2M">
    <property type="method" value="X-ray"/>
    <property type="resolution" value="1.82 A"/>
    <property type="chains" value="A/B=2-222"/>
</dbReference>
<dbReference type="PDBsum" id="2ICU"/>
<dbReference type="PDBsum" id="6KBS"/>
<dbReference type="PDBsum" id="6KBU"/>
<dbReference type="PDBsum" id="6KBX"/>
<dbReference type="PDBsum" id="6KBZ"/>
<dbReference type="PDBsum" id="6KCQ"/>
<dbReference type="PDBsum" id="6KIJ"/>
<dbReference type="PDBsum" id="6NUA"/>
<dbReference type="PDBsum" id="6NUH"/>
<dbReference type="PDBsum" id="8D2M"/>
<dbReference type="SMR" id="P76318"/>
<dbReference type="BioGRID" id="4261039">
    <property type="interactions" value="24"/>
</dbReference>
<dbReference type="FunCoup" id="P76318">
    <property type="interactions" value="391"/>
</dbReference>
<dbReference type="IntAct" id="P76318">
    <property type="interactions" value="14"/>
</dbReference>
<dbReference type="STRING" id="511145.b1931"/>
<dbReference type="jPOST" id="P76318"/>
<dbReference type="PaxDb" id="511145-b1931"/>
<dbReference type="EnsemblBacteria" id="AAT48139">
    <property type="protein sequence ID" value="AAT48139"/>
    <property type="gene ID" value="b1931"/>
</dbReference>
<dbReference type="GeneID" id="946435"/>
<dbReference type="KEGG" id="ecj:JW1916"/>
<dbReference type="KEGG" id="eco:b1931"/>
<dbReference type="KEGG" id="ecoc:C3026_10950"/>
<dbReference type="PATRIC" id="fig|511145.12.peg.2013"/>
<dbReference type="EchoBASE" id="EB3063"/>
<dbReference type="eggNOG" id="COG2135">
    <property type="taxonomic scope" value="Bacteria"/>
</dbReference>
<dbReference type="HOGENOM" id="CLU_035990_6_1_6"/>
<dbReference type="InParanoid" id="P76318"/>
<dbReference type="OMA" id="LWSVWKP"/>
<dbReference type="OrthoDB" id="6192129at2"/>
<dbReference type="PhylomeDB" id="P76318"/>
<dbReference type="BioCyc" id="EcoCyc:EG11662-MONOMER"/>
<dbReference type="BioCyc" id="MetaCyc:EG11662-MONOMER"/>
<dbReference type="EvolutionaryTrace" id="P76318"/>
<dbReference type="PRO" id="PR:P76318"/>
<dbReference type="Proteomes" id="UP000000625">
    <property type="component" value="Chromosome"/>
</dbReference>
<dbReference type="GO" id="GO:0008233">
    <property type="term" value="F:peptidase activity"/>
    <property type="evidence" value="ECO:0007669"/>
    <property type="project" value="UniProtKB-KW"/>
</dbReference>
<dbReference type="GO" id="GO:0160129">
    <property type="term" value="F:protein-DNA covalent cross-linking activity"/>
    <property type="evidence" value="ECO:0000314"/>
    <property type="project" value="UniProtKB"/>
</dbReference>
<dbReference type="GO" id="GO:0003697">
    <property type="term" value="F:single-stranded DNA binding"/>
    <property type="evidence" value="ECO:0000314"/>
    <property type="project" value="UniProtKB"/>
</dbReference>
<dbReference type="GO" id="GO:0006974">
    <property type="term" value="P:DNA damage response"/>
    <property type="evidence" value="ECO:0000314"/>
    <property type="project" value="UniProtKB"/>
</dbReference>
<dbReference type="GO" id="GO:0106300">
    <property type="term" value="P:protein-DNA covalent cross-linking repair"/>
    <property type="evidence" value="ECO:0007669"/>
    <property type="project" value="InterPro"/>
</dbReference>
<dbReference type="GO" id="GO:0006508">
    <property type="term" value="P:proteolysis"/>
    <property type="evidence" value="ECO:0007669"/>
    <property type="project" value="UniProtKB-KW"/>
</dbReference>
<dbReference type="GO" id="GO:0009432">
    <property type="term" value="P:SOS response"/>
    <property type="evidence" value="ECO:0007669"/>
    <property type="project" value="UniProtKB-KW"/>
</dbReference>
<dbReference type="Gene3D" id="3.90.1680.10">
    <property type="entry name" value="SOS response associated peptidase-like"/>
    <property type="match status" value="1"/>
</dbReference>
<dbReference type="InterPro" id="IPR003738">
    <property type="entry name" value="SRAP"/>
</dbReference>
<dbReference type="InterPro" id="IPR036590">
    <property type="entry name" value="SRAP-like"/>
</dbReference>
<dbReference type="NCBIfam" id="NF007413">
    <property type="entry name" value="PRK09951.1"/>
    <property type="match status" value="1"/>
</dbReference>
<dbReference type="PANTHER" id="PTHR13604:SF0">
    <property type="entry name" value="ABASIC SITE PROCESSING PROTEIN HMCES"/>
    <property type="match status" value="1"/>
</dbReference>
<dbReference type="PANTHER" id="PTHR13604">
    <property type="entry name" value="DC12-RELATED"/>
    <property type="match status" value="1"/>
</dbReference>
<dbReference type="Pfam" id="PF02586">
    <property type="entry name" value="SRAP"/>
    <property type="match status" value="1"/>
</dbReference>
<dbReference type="SUPFAM" id="SSF143081">
    <property type="entry name" value="BB1717-like"/>
    <property type="match status" value="1"/>
</dbReference>
<evidence type="ECO:0000250" key="1">
    <source>
        <dbReference type="UniProtKB" id="Q8R1M0"/>
    </source>
</evidence>
<evidence type="ECO:0000250" key="2">
    <source>
        <dbReference type="UniProtKB" id="Q96FZ2"/>
    </source>
</evidence>
<evidence type="ECO:0000269" key="3">
    <source>
    </source>
</evidence>
<evidence type="ECO:0000269" key="4">
    <source>
    </source>
</evidence>
<evidence type="ECO:0000269" key="5">
    <source>
    </source>
</evidence>
<evidence type="ECO:0000269" key="6">
    <source>
    </source>
</evidence>
<evidence type="ECO:0000269" key="7">
    <source>
    </source>
</evidence>
<evidence type="ECO:0000269" key="8">
    <source>
    </source>
</evidence>
<evidence type="ECO:0000303" key="9">
    <source>
    </source>
</evidence>
<evidence type="ECO:0000305" key="10"/>
<evidence type="ECO:0000305" key="11">
    <source>
    </source>
</evidence>
<evidence type="ECO:0000305" key="12">
    <source>
    </source>
</evidence>
<evidence type="ECO:0000305" key="13">
    <source>
    </source>
</evidence>
<evidence type="ECO:0007744" key="14">
    <source>
        <dbReference type="PDB" id="6KBS"/>
    </source>
</evidence>
<evidence type="ECO:0007744" key="15">
    <source>
        <dbReference type="PDB" id="6KBU"/>
    </source>
</evidence>
<evidence type="ECO:0007744" key="16">
    <source>
        <dbReference type="PDB" id="6KBX"/>
    </source>
</evidence>
<evidence type="ECO:0007744" key="17">
    <source>
        <dbReference type="PDB" id="6KBZ"/>
    </source>
</evidence>
<evidence type="ECO:0007744" key="18">
    <source>
        <dbReference type="PDB" id="6KCQ"/>
    </source>
</evidence>
<evidence type="ECO:0007744" key="19">
    <source>
        <dbReference type="PDB" id="6KIJ"/>
    </source>
</evidence>
<evidence type="ECO:0007744" key="20">
    <source>
        <dbReference type="PDB" id="6NUA"/>
    </source>
</evidence>
<evidence type="ECO:0007744" key="21">
    <source>
        <dbReference type="PDB" id="6NUH"/>
    </source>
</evidence>
<evidence type="ECO:0007829" key="22">
    <source>
        <dbReference type="PDB" id="6KBX"/>
    </source>
</evidence>
<feature type="initiator methionine" description="Removed" evidence="1">
    <location>
        <position position="1"/>
    </location>
</feature>
<feature type="chain" id="PRO_0000169094" description="Abasic site processing protein YedK">
    <location>
        <begin position="2"/>
        <end position="222"/>
    </location>
</feature>
<feature type="active site" description="Nucleophile" evidence="5 6">
    <location>
        <position position="2"/>
    </location>
</feature>
<feature type="active site" evidence="12 13">
    <location>
        <position position="105"/>
    </location>
</feature>
<feature type="site" description="Required for sensing abasic sites" evidence="6">
    <location>
        <position position="105"/>
    </location>
</feature>
<feature type="site" description="Required to stabilize abasic sites" evidence="5">
    <location>
        <position position="160"/>
    </location>
</feature>
<feature type="modified residue" description="Thiazolidine linkage to a ring-opened DNA abasic site" evidence="5 6">
    <location>
        <position position="2"/>
    </location>
</feature>
<feature type="mutagenesis site" description="Abolished formation of the DNA-protein cross-link. Reduced binding to single-stranded DNA." evidence="5 6">
    <original>C</original>
    <variation>A</variation>
    <location>
        <position position="2"/>
    </location>
</feature>
<feature type="mutagenesis site" description="Abolished formation of the DNA-protein cross-link, possibly via the formation of an oxazolidine ring with DNA that is not as stable as a thiazolidine." evidence="5">
    <original>C</original>
    <variation>S</variation>
    <location>
        <position position="2"/>
    </location>
</feature>
<feature type="mutagenesis site" description="Reduced binding to single-stranded DNA." evidence="6">
    <original>R</original>
    <variation>A</variation>
    <location>
        <position position="4"/>
    </location>
</feature>
<feature type="mutagenesis site" description="Reduced binding to single-stranded DNA." evidence="6">
    <original>P</original>
    <variation>G</variation>
    <location>
        <position position="40"/>
    </location>
</feature>
<feature type="mutagenesis site" description="Abolished binding to single-stranded DNA." evidence="6">
    <original>W</original>
    <variation>A</variation>
    <location>
        <position position="67"/>
    </location>
</feature>
<feature type="mutagenesis site" description="Abolished binding to single-stranded DNA." evidence="6">
    <original>W</original>
    <variation>A</variation>
    <location>
        <position position="68"/>
    </location>
</feature>
<feature type="mutagenesis site" description="Slightly reduced binding to single-stranded DNA." evidence="6">
    <original>K</original>
    <variation>A</variation>
    <location>
        <position position="70"/>
    </location>
</feature>
<feature type="mutagenesis site" description="Reduced formation of the DNA-protein cross-link. Reduced binding to single-stranded DNA." evidence="5 6 7">
    <original>N</original>
    <variation>A</variation>
    <location>
        <position position="75"/>
    </location>
</feature>
<feature type="mutagenesis site" description="Abolished binding to single-stranded DNA." evidence="6">
    <original>R</original>
    <variation>A</variation>
    <location>
        <position position="77"/>
    </location>
</feature>
<feature type="mutagenesis site" description="Reduced binding to single-stranded DNA." evidence="6">
    <original>T</original>
    <variation>A</variation>
    <location>
        <position position="80"/>
    </location>
</feature>
<feature type="mutagenesis site" description="Reduced binding to single-stranded DNA." evidence="6">
    <original>S</original>
    <variation>A</variation>
    <location>
        <position position="84"/>
    </location>
</feature>
<feature type="mutagenesis site" description="Strongly reduced binding to single-stranded DNA." evidence="6">
    <original>R</original>
    <variation>A</variation>
    <location>
        <position position="85"/>
    </location>
</feature>
<feature type="mutagenesis site" description="Reduced formation of the DNA-protein cross-link. Abolished ability to mediate self-reversal of covalent cross-link with DNA. Increased binding to single-stranded DNA and further increased affinity for single-stranded DNA containing an abasic site." evidence="5 6 7 8">
    <original>E</original>
    <variation>A</variation>
    <location>
        <position position="105"/>
    </location>
</feature>
<feature type="mutagenesis site" description="Slightly impaired activity." evidence="7">
    <original>E</original>
    <variation>D</variation>
    <location>
        <position position="105"/>
    </location>
</feature>
<feature type="mutagenesis site" description="Strongly impaired activity." evidence="7">
    <original>E</original>
    <variation>Q</variation>
    <location>
        <position position="105"/>
    </location>
</feature>
<feature type="mutagenesis site" description="Reduced binding to single-stranded DNA." evidence="6">
    <original>W</original>
    <variation>A</variation>
    <location>
        <position position="106"/>
    </location>
</feature>
<feature type="mutagenesis site" description="Does not affect binding to single-stranded DNA." evidence="6">
    <original>K</original>
    <variation>A</variation>
    <location>
        <position position="113"/>
    </location>
</feature>
<feature type="mutagenesis site" description="Reduced formation of the DNA-protein cross-link. Abolished binding to single-stranded DNA." evidence="6">
    <original>T</original>
    <variation>A</variation>
    <location>
        <position position="149"/>
    </location>
</feature>
<feature type="mutagenesis site" description="Reduced formation of the DNA-protein cross-link. Slightly increased binding to single-stranded DNA." evidence="5 6">
    <original>H</original>
    <variation>A</variation>
    <location>
        <position position="160"/>
    </location>
</feature>
<feature type="mutagenesis site" description="Impaired activity." evidence="7">
    <original>H</original>
    <variation>E</variation>
    <location>
        <position position="160"/>
    </location>
</feature>
<feature type="mutagenesis site" description="Strongly impaired activity." evidence="7">
    <original>H</original>
    <variation>Q</variation>
    <location>
        <position position="160"/>
    </location>
</feature>
<feature type="mutagenesis site" description="Abolished binding to single-stranded DNA." evidence="6">
    <original>R</original>
    <variation>A</variation>
    <location>
        <position position="162"/>
    </location>
</feature>
<feature type="strand" evidence="22">
    <location>
        <begin position="4"/>
        <end position="7"/>
    </location>
</feature>
<feature type="helix" evidence="22">
    <location>
        <begin position="11"/>
        <end position="15"/>
    </location>
</feature>
<feature type="turn" evidence="22">
    <location>
        <begin position="16"/>
        <end position="18"/>
    </location>
</feature>
<feature type="helix" evidence="22">
    <location>
        <begin position="21"/>
        <end position="23"/>
    </location>
</feature>
<feature type="strand" evidence="22">
    <location>
        <begin position="35"/>
        <end position="38"/>
    </location>
</feature>
<feature type="strand" evidence="22">
    <location>
        <begin position="42"/>
        <end position="50"/>
    </location>
</feature>
<feature type="strand" evidence="22">
    <location>
        <begin position="53"/>
        <end position="61"/>
    </location>
</feature>
<feature type="strand" evidence="22">
    <location>
        <begin position="75"/>
        <end position="77"/>
    </location>
</feature>
<feature type="turn" evidence="22">
    <location>
        <begin position="78"/>
        <end position="80"/>
    </location>
</feature>
<feature type="helix" evidence="22">
    <location>
        <begin position="81"/>
        <end position="83"/>
    </location>
</feature>
<feature type="turn" evidence="22">
    <location>
        <begin position="85"/>
        <end position="87"/>
    </location>
</feature>
<feature type="helix" evidence="22">
    <location>
        <begin position="88"/>
        <end position="93"/>
    </location>
</feature>
<feature type="strand" evidence="22">
    <location>
        <begin position="95"/>
        <end position="109"/>
    </location>
</feature>
<feature type="strand" evidence="22">
    <location>
        <begin position="112"/>
        <end position="120"/>
    </location>
</feature>
<feature type="strand" evidence="22">
    <location>
        <begin position="126"/>
        <end position="132"/>
    </location>
</feature>
<feature type="helix" evidence="22">
    <location>
        <begin position="136"/>
        <end position="138"/>
    </location>
</feature>
<feature type="strand" evidence="22">
    <location>
        <begin position="141"/>
        <end position="143"/>
    </location>
</feature>
<feature type="strand" evidence="22">
    <location>
        <begin position="145"/>
        <end position="151"/>
    </location>
</feature>
<feature type="helix" evidence="22">
    <location>
        <begin position="154"/>
        <end position="158"/>
    </location>
</feature>
<feature type="strand" evidence="22">
    <location>
        <begin position="161"/>
        <end position="164"/>
    </location>
</feature>
<feature type="helix" evidence="22">
    <location>
        <begin position="169"/>
        <end position="176"/>
    </location>
</feature>
<feature type="helix" evidence="22">
    <location>
        <begin position="182"/>
        <end position="192"/>
    </location>
</feature>
<feature type="helix" evidence="22">
    <location>
        <begin position="196"/>
        <end position="198"/>
    </location>
</feature>
<feature type="strand" evidence="22">
    <location>
        <begin position="199"/>
        <end position="203"/>
    </location>
</feature>
<feature type="helix" evidence="22">
    <location>
        <begin position="206"/>
        <end position="209"/>
    </location>
</feature>
<feature type="helix" evidence="22">
    <location>
        <begin position="216"/>
        <end position="219"/>
    </location>
</feature>
<sequence length="222" mass="24979">MCGRFAQSQTREDYLALLAEDIERDIPYDPEPIGRYNVAPGTKVLLLSERDEHLHLDPVFWGYAPGWWDKPPLINARVETAATSRMFKPLWQHGRAICFADGWFEWKKEGDKKQPFFIYRADGQPIFMAAIGSTPFERGDEAEGFLIVTAAADQGLVDIHDRRPLVLSPEAAREWMRQEISGKEASEIAASGCVPANQFSWHPVSRAVGNVKNQGAELIQPV</sequence>
<proteinExistence type="evidence at protein level"/>
<accession>P76318</accession>
<accession>Q2MB05</accession>
<gene>
    <name evidence="9" type="primary">yedK</name>
    <name type="synonym">yedG</name>
    <name type="ordered locus">b1931</name>
    <name type="ordered locus">JW1916</name>
</gene>
<protein>
    <recommendedName>
        <fullName evidence="10">Abasic site processing protein YedK</fullName>
        <ecNumber evidence="6">4.-.-.-</ecNumber>
    </recommendedName>
    <alternativeName>
        <fullName>Peptidase YedK</fullName>
        <ecNumber evidence="1">3.4.-.-</ecNumber>
    </alternativeName>
</protein>
<keyword id="KW-0002">3D-structure</keyword>
<keyword id="KW-0190">Covalent protein-DNA linkage</keyword>
<keyword id="KW-0227">DNA damage</keyword>
<keyword id="KW-0238">DNA-binding</keyword>
<keyword id="KW-0378">Hydrolase</keyword>
<keyword id="KW-0456">Lyase</keyword>
<keyword id="KW-0645">Protease</keyword>
<keyword id="KW-1185">Reference proteome</keyword>
<keyword id="KW-0742">SOS response</keyword>
<reference key="1">
    <citation type="journal article" date="1993" name="J. Gen. Microbiol.">
        <title>Organization of the Escherichia coli and Salmonella typhimurium chromosomes between flagellar regions IIIa and IIIb, including a large non-coding region.</title>
        <authorList>
            <person name="Raha M."/>
            <person name="Kihara M."/>
            <person name="Kawagishi I."/>
            <person name="Macnab R.M."/>
        </authorList>
    </citation>
    <scope>NUCLEOTIDE SEQUENCE [GENOMIC DNA]</scope>
    <source>
        <strain>JA11</strain>
    </source>
</reference>
<reference key="2">
    <citation type="journal article" date="1997" name="Science">
        <title>The complete genome sequence of Escherichia coli K-12.</title>
        <authorList>
            <person name="Blattner F.R."/>
            <person name="Plunkett G. III"/>
            <person name="Bloch C.A."/>
            <person name="Perna N.T."/>
            <person name="Burland V."/>
            <person name="Riley M."/>
            <person name="Collado-Vides J."/>
            <person name="Glasner J.D."/>
            <person name="Rode C.K."/>
            <person name="Mayhew G.F."/>
            <person name="Gregor J."/>
            <person name="Davis N.W."/>
            <person name="Kirkpatrick H.A."/>
            <person name="Goeden M.A."/>
            <person name="Rose D.J."/>
            <person name="Mau B."/>
            <person name="Shao Y."/>
        </authorList>
    </citation>
    <scope>NUCLEOTIDE SEQUENCE [LARGE SCALE GENOMIC DNA]</scope>
    <source>
        <strain>K12 / MG1655 / ATCC 47076</strain>
    </source>
</reference>
<reference key="3">
    <citation type="journal article" date="2006" name="Nucleic Acids Res.">
        <title>Escherichia coli K-12: a cooperatively developed annotation snapshot -- 2005.</title>
        <authorList>
            <person name="Riley M."/>
            <person name="Abe T."/>
            <person name="Arnaud M.B."/>
            <person name="Berlyn M.K.B."/>
            <person name="Blattner F.R."/>
            <person name="Chaudhuri R.R."/>
            <person name="Glasner J.D."/>
            <person name="Horiuchi T."/>
            <person name="Keseler I.M."/>
            <person name="Kosuge T."/>
            <person name="Mori H."/>
            <person name="Perna N.T."/>
            <person name="Plunkett G. III"/>
            <person name="Rudd K.E."/>
            <person name="Serres M.H."/>
            <person name="Thomas G.H."/>
            <person name="Thomson N.R."/>
            <person name="Wishart D."/>
            <person name="Wanner B.L."/>
        </authorList>
    </citation>
    <scope>SEQUENCE REVISION</scope>
</reference>
<reference key="4">
    <citation type="journal article" date="2006" name="Mol. Syst. Biol.">
        <title>Highly accurate genome sequences of Escherichia coli K-12 strains MG1655 and W3110.</title>
        <authorList>
            <person name="Hayashi K."/>
            <person name="Morooka N."/>
            <person name="Yamamoto Y."/>
            <person name="Fujita K."/>
            <person name="Isono K."/>
            <person name="Choi S."/>
            <person name="Ohtsubo E."/>
            <person name="Baba T."/>
            <person name="Wanner B.L."/>
            <person name="Mori H."/>
            <person name="Horiuchi T."/>
        </authorList>
    </citation>
    <scope>NUCLEOTIDE SEQUENCE [LARGE SCALE GENOMIC DNA]</scope>
    <source>
        <strain>K12 / W3110 / ATCC 27325 / DSM 5911</strain>
    </source>
</reference>
<reference key="5">
    <citation type="journal article" date="2013" name="Biol. Direct">
        <title>Novel autoproteolytic and DNA-damage sensing components in the bacterial SOS response and oxidized methylcytosine-induced eukaryotic DNA demethylation systems.</title>
        <authorList>
            <person name="Aravind L."/>
            <person name="Anand S."/>
            <person name="Iyer L.M."/>
        </authorList>
    </citation>
    <scope>IDENTIFICATION</scope>
</reference>
<reference key="6">
    <citation type="journal article" date="2017" name="Cell Rep.">
        <title>Erasure of Tet-Oxidized 5-Methylcytosine by a SRAP Nuclease.</title>
        <authorList>
            <person name="Kweon S.M."/>
            <person name="Zhu B."/>
            <person name="Chen Y."/>
            <person name="Aravind L."/>
            <person name="Xu S.Y."/>
            <person name="Feldman D.E."/>
        </authorList>
    </citation>
    <scope>ACTIVITY IN VITRO</scope>
</reference>
<reference key="7">
    <citation type="journal article" date="2019" name="Cell">
        <title>HMCES maintains genome integrity by shielding abasic sites in single-strand DNA.</title>
        <authorList>
            <person name="Mohni K.N."/>
            <person name="Wessel S.R."/>
            <person name="Zhao R."/>
            <person name="Wojciechowski A.C."/>
            <person name="Luzwick J.W."/>
            <person name="Layden H."/>
            <person name="Eichman B.F."/>
            <person name="Thompson P.S."/>
            <person name="Mehta K.P.M."/>
            <person name="Cortez D."/>
        </authorList>
    </citation>
    <scope>FUNCTION</scope>
    <scope>DNA-BINDING</scope>
</reference>
<reference key="8">
    <citation type="journal article" date="2022" name="J. Biol. Chem.">
        <title>The SOS response-associated peptidase (SRAP) domain of YedK catalyzes ring opening of abasic sites and reversal of its DNA-protein cross-link.</title>
        <authorList>
            <person name="Paulin K.A."/>
            <person name="Cortez D."/>
            <person name="Eichman B.F."/>
        </authorList>
    </citation>
    <scope>FUNCTION</scope>
    <scope>ACTIVE SITE</scope>
    <scope>MUTAGENESIS OF ASN-75; GLU-105 AND HIS-160</scope>
</reference>
<reference key="9">
    <citation type="journal article" date="2023" name="EMBO J.">
        <title>A non-proteolytic release mechanism for HMCES-DNA-protein crosslinks.</title>
        <authorList>
            <person name="Donsbach M."/>
            <person name="Duerauer S."/>
            <person name="Gruenert F."/>
            <person name="Nguyen K.T."/>
            <person name="Nigam R."/>
            <person name="Yaneva D."/>
            <person name="Weickert P."/>
            <person name="Bezalel-Buch R."/>
            <person name="Semlow D.R."/>
            <person name="Stingele J."/>
        </authorList>
    </citation>
    <scope>FUNCTION</scope>
    <scope>ACTIVE SITE</scope>
    <scope>MUTAGENESIS OF GLU-105</scope>
</reference>
<reference evidence="20 21" key="10">
    <citation type="journal article" date="2019" name="Nat. Struct. Mol. Biol.">
        <title>Protection of abasic sites during DNA replication by a stable thiazolidine protein-DNA cross-link.</title>
        <authorList>
            <person name="Thompson P.S."/>
            <person name="Amidon K.M."/>
            <person name="Mohni K.N."/>
            <person name="Cortez D."/>
            <person name="Eichman B.F."/>
        </authorList>
    </citation>
    <scope>X-RAY CRYSTALLOGRAPHY (1.59 ANGSTROMS) OF 2-222 IN COMPLEX WITH A DNA ABASIC SITE</scope>
    <scope>THIAZOLIDINE LINKAGE TO A DNA ABASIC SITE</scope>
    <scope>FUNCTION</scope>
    <scope>CATALYTIC ACTIVITY</scope>
    <scope>ACTIVE SITE</scope>
    <scope>DOMAIN</scope>
    <scope>MUTAGENESIS OF CYS-2; ASN-75; GLU-105 AND HIS-160</scope>
</reference>
<reference evidence="14 15 16 17 18 19" key="11">
    <citation type="journal article" date="2019" name="Nucleic Acids Res.">
        <title>Molecular basis of abasic site sensing in single-stranded DNA by the SRAP domain of E. coli yedK.</title>
        <authorList>
            <person name="Wang N."/>
            <person name="Bao H."/>
            <person name="Chen L."/>
            <person name="Liu Y."/>
            <person name="Li Y."/>
            <person name="Wu B."/>
            <person name="Huang H."/>
        </authorList>
    </citation>
    <scope>X-RAY CRYSTALLOGRAPHY (1.22 ANGSTROMS) OF 2-222 IN COMPLEX WITH A DNA ABASIC SITE</scope>
    <scope>THIAZOLIDINE LINKAGE TO A DNA ABASIC SITE</scope>
    <scope>FUNCTION</scope>
    <scope>CATALYTIC ACTIVITY</scope>
    <scope>ACTIVE SITE</scope>
    <scope>DOMAIN</scope>
    <scope>REACTION MECHANISM</scope>
    <scope>MUTAGENESIS OF CYS-2; ARG-4; PRO-40; TRP-67; TRP-68; LYS-70; ASN-75; ARG-77; THR-80; SER-84; ARG-85; GLU-105; TRP-106; LYS-113; THR-149; HIS-160 AND ARG-162</scope>
</reference>
<comment type="function">
    <text evidence="1 4 5 6 7 8">Sensor of abasic sites in single-stranded DNA (ssDNA) required to preserve genome integrity by promoting error-free repair of abasic sites (PubMed:30554877). Recognizes and binds abasic sites in ssDNA at replication forks and chemically modifies the lesion by forming a covalent cross-link with DNA: forms a stable thiazolidine linkage between a ring-opened abasic site and the alpha-amino and sulfhydryl substituents of its N-terminal catalytic cysteine residue (PubMed:30554877, PubMed:31235915, PubMed:31504793). The DNA-protein cross-link is then reversed: able to catalyze the reversal of the thiazolidine cross-link and cycle between a cross-link and a non-cross-linked state depending on DNA context: mediates self-reversal of the thiazolidine cross-link in double stranded DNA (PubMed:35934051, PubMed:37519246). May act as a protease: mediates autocatalytic processing of its N-terminal methionine in order to expose the catalytic cysteine (By similarity).</text>
</comment>
<comment type="activity regulation">
    <text evidence="2">Formation and reversal of DNA-protein cross-link depends on DNA context. Catalyzes formation of the thiazolidine linkage in presence of abasic sites in single-stranded DNA. Mediates the reversal of the thiazolidine cross-link in presence of double stranded DNA.</text>
</comment>
<comment type="domain">
    <text evidence="2 5 6">The N-terminal catalytic Cys-2 residue forms a thiazolidine linkage to a ring-opened DNA abasic site (PubMed:31235915, PubMed:31504793). Glu-105 catalyzes reversal of the thiazolidine linkage; self-reversal is favoured by duplex DNA formation (By similarity). Glu-105 is also involved in sensing abasic sites in single-stranded DNA (ssDNA) (PubMed:31504793). His-160 stabilizes the abasic sites by forming a hydrogen bond with the O4' hydroxyl group (PubMed:31235915).</text>
</comment>
<comment type="miscellaneous">
    <text evidence="6">The thiol group of the catalytic Cys-2 is deprotonated by its alpha-amino group to form a thiolate anion that is poised for catalysis (PubMed:31504793). The abasic site sugar moiety is in equilibrium between its cyclic furanose and open-chain aldehyde forms (PubMed:31504793). The Cys-2 thiolate anion attacks the abasic site C1' position to form a covalent bond (PubMed:31504793). The Cys-2 alpha-amino group proton then transfers to the oxygen which is stabilized by the Asn-75 side chain (PubMed:31504793). The O4' rotates to a new position and interacts with the His-160 side chain (PubMed:31504793). The Cys-2 alpha-amino group then attacks the C1' position and transfers a proton to the hydroxyl group to release a water molecule, meanwhile forming a covalent bond with the C1' atom (PubMed:31504793). Thus, a thiazolidine linkage is formed between the abasic site C1' atom and the Cys-2 amino and thiol groups (PubMed:31504793). The Glu-105 side chain carboxyl stabilizes the thiazolidine linkage via a strong hydrogen bond with its amine group (PubMed:31504793).</text>
</comment>
<comment type="similarity">
    <text evidence="10">Belongs to the SOS response-associated peptidase family.</text>
</comment>
<comment type="caution">
    <text evidence="3 11">Was reported to act as an endonuclease that specifically cleaves 5-hydroxymethylcytosine (5hmC)-containing DNA in vitro (PubMed:29020633). Additional experiments are however required to confirm this activity as this protein is present in many organisms that do not utilize methylcytosine for epigenetic control.</text>
</comment>
<name>YEDK_ECOLI</name>
<organism>
    <name type="scientific">Escherichia coli (strain K12)</name>
    <dbReference type="NCBI Taxonomy" id="83333"/>
    <lineage>
        <taxon>Bacteria</taxon>
        <taxon>Pseudomonadati</taxon>
        <taxon>Pseudomonadota</taxon>
        <taxon>Gammaproteobacteria</taxon>
        <taxon>Enterobacterales</taxon>
        <taxon>Enterobacteriaceae</taxon>
        <taxon>Escherichia</taxon>
    </lineage>
</organism>